<keyword id="KW-0997">Cell inner membrane</keyword>
<keyword id="KW-1003">Cell membrane</keyword>
<keyword id="KW-0342">GTP-binding</keyword>
<keyword id="KW-0378">Hydrolase</keyword>
<keyword id="KW-0472">Membrane</keyword>
<keyword id="KW-0547">Nucleotide-binding</keyword>
<keyword id="KW-0648">Protein biosynthesis</keyword>
<keyword id="KW-1185">Reference proteome</keyword>
<accession>B2VI44</accession>
<reference key="1">
    <citation type="journal article" date="2008" name="Environ. Microbiol.">
        <title>The genome of Erwinia tasmaniensis strain Et1/99, a non-pathogenic bacterium in the genus Erwinia.</title>
        <authorList>
            <person name="Kube M."/>
            <person name="Migdoll A.M."/>
            <person name="Mueller I."/>
            <person name="Kuhl H."/>
            <person name="Beck A."/>
            <person name="Reinhardt R."/>
            <person name="Geider K."/>
        </authorList>
    </citation>
    <scope>NUCLEOTIDE SEQUENCE [LARGE SCALE GENOMIC DNA]</scope>
    <source>
        <strain>DSM 17950 / CFBP 7177 / CIP 109463 / NCPPB 4357 / Et1/99</strain>
    </source>
</reference>
<proteinExistence type="inferred from homology"/>
<gene>
    <name evidence="1" type="primary">lepA</name>
    <name type="ordered locus">ETA_09900</name>
</gene>
<sequence>MKHIRNFSIIAHIDHGKSTLSDRLIQICGGLTEREMAAQVLDSMDLERERGITIKAQSVTLDYHAKDGETYQLNFIDTPGHVDFSYEVSRSLAACEGALLVVDAGQGVEAQTLANCYTAMEMDLEVVPVLNKIDLPAADPDRVSQEIEDIVGIDATDAVRCSAKTGVGVPDVLERLVRDIPPPEGDPEGPLQALIIDSWFDNYLGVVSLVRIKNGTMRKGEKIKVMSTGQIYNADRLGIFTPKREDTDVLNCGEVGWLVCAIKDILGAPVGDTLTLARHPAEKALPGFKKVKPQVYAGLFPISSDDYEAFRDALGKLSLNDASLFYEPESSTALGFGFRCGFLGLLHMEIIQERLEREYDLELITTAPTVVYEVQTTDGETVYVDSPGKLPPLNNIEELREPIAECHMLLPQEYLGNVITLCIEKRGVQTNMVYHGNQVALTYDIPMAEVVLDFFDRLKSTSRGYASLDYNFKRFTASDMVRVDVLINSERVDALALITHRDNSQYRGRELVEKMKDLIPRQQFDIAIQAAIGNHIIARSTVKQLRKNVLAKCYGGDVSRKKKLLQKQKDGKKRMKQVGNVELPQEAFLAILHVGKDSK</sequence>
<feature type="chain" id="PRO_1000092398" description="Elongation factor 4">
    <location>
        <begin position="1"/>
        <end position="599"/>
    </location>
</feature>
<feature type="domain" description="tr-type G">
    <location>
        <begin position="2"/>
        <end position="184"/>
    </location>
</feature>
<feature type="binding site" evidence="1">
    <location>
        <begin position="14"/>
        <end position="19"/>
    </location>
    <ligand>
        <name>GTP</name>
        <dbReference type="ChEBI" id="CHEBI:37565"/>
    </ligand>
</feature>
<feature type="binding site" evidence="1">
    <location>
        <begin position="131"/>
        <end position="134"/>
    </location>
    <ligand>
        <name>GTP</name>
        <dbReference type="ChEBI" id="CHEBI:37565"/>
    </ligand>
</feature>
<comment type="function">
    <text evidence="1">Required for accurate and efficient protein synthesis under certain stress conditions. May act as a fidelity factor of the translation reaction, by catalyzing a one-codon backward translocation of tRNAs on improperly translocated ribosomes. Back-translocation proceeds from a post-translocation (POST) complex to a pre-translocation (PRE) complex, thus giving elongation factor G a second chance to translocate the tRNAs correctly. Binds to ribosomes in a GTP-dependent manner.</text>
</comment>
<comment type="catalytic activity">
    <reaction evidence="1">
        <text>GTP + H2O = GDP + phosphate + H(+)</text>
        <dbReference type="Rhea" id="RHEA:19669"/>
        <dbReference type="ChEBI" id="CHEBI:15377"/>
        <dbReference type="ChEBI" id="CHEBI:15378"/>
        <dbReference type="ChEBI" id="CHEBI:37565"/>
        <dbReference type="ChEBI" id="CHEBI:43474"/>
        <dbReference type="ChEBI" id="CHEBI:58189"/>
        <dbReference type="EC" id="3.6.5.n1"/>
    </reaction>
</comment>
<comment type="subcellular location">
    <subcellularLocation>
        <location evidence="1">Cell inner membrane</location>
        <topology evidence="1">Peripheral membrane protein</topology>
        <orientation evidence="1">Cytoplasmic side</orientation>
    </subcellularLocation>
</comment>
<comment type="similarity">
    <text evidence="1">Belongs to the TRAFAC class translation factor GTPase superfamily. Classic translation factor GTPase family. LepA subfamily.</text>
</comment>
<organism>
    <name type="scientific">Erwinia tasmaniensis (strain DSM 17950 / CFBP 7177 / CIP 109463 / NCPPB 4357 / Et1/99)</name>
    <dbReference type="NCBI Taxonomy" id="465817"/>
    <lineage>
        <taxon>Bacteria</taxon>
        <taxon>Pseudomonadati</taxon>
        <taxon>Pseudomonadota</taxon>
        <taxon>Gammaproteobacteria</taxon>
        <taxon>Enterobacterales</taxon>
        <taxon>Erwiniaceae</taxon>
        <taxon>Erwinia</taxon>
    </lineage>
</organism>
<protein>
    <recommendedName>
        <fullName evidence="1">Elongation factor 4</fullName>
        <shortName evidence="1">EF-4</shortName>
        <ecNumber evidence="1">3.6.5.n1</ecNumber>
    </recommendedName>
    <alternativeName>
        <fullName evidence="1">Ribosomal back-translocase LepA</fullName>
    </alternativeName>
</protein>
<evidence type="ECO:0000255" key="1">
    <source>
        <dbReference type="HAMAP-Rule" id="MF_00071"/>
    </source>
</evidence>
<name>LEPA_ERWT9</name>
<dbReference type="EC" id="3.6.5.n1" evidence="1"/>
<dbReference type="EMBL" id="CU468135">
    <property type="protein sequence ID" value="CAO96036.1"/>
    <property type="molecule type" value="Genomic_DNA"/>
</dbReference>
<dbReference type="RefSeq" id="WP_012440737.1">
    <property type="nucleotide sequence ID" value="NC_010694.1"/>
</dbReference>
<dbReference type="SMR" id="B2VI44"/>
<dbReference type="STRING" id="465817.ETA_09900"/>
<dbReference type="KEGG" id="eta:ETA_09900"/>
<dbReference type="eggNOG" id="COG0481">
    <property type="taxonomic scope" value="Bacteria"/>
</dbReference>
<dbReference type="HOGENOM" id="CLU_009995_3_3_6"/>
<dbReference type="OrthoDB" id="9804431at2"/>
<dbReference type="Proteomes" id="UP000001726">
    <property type="component" value="Chromosome"/>
</dbReference>
<dbReference type="GO" id="GO:0005886">
    <property type="term" value="C:plasma membrane"/>
    <property type="evidence" value="ECO:0007669"/>
    <property type="project" value="UniProtKB-SubCell"/>
</dbReference>
<dbReference type="GO" id="GO:0005525">
    <property type="term" value="F:GTP binding"/>
    <property type="evidence" value="ECO:0007669"/>
    <property type="project" value="UniProtKB-UniRule"/>
</dbReference>
<dbReference type="GO" id="GO:0003924">
    <property type="term" value="F:GTPase activity"/>
    <property type="evidence" value="ECO:0007669"/>
    <property type="project" value="UniProtKB-UniRule"/>
</dbReference>
<dbReference type="GO" id="GO:0097216">
    <property type="term" value="F:guanosine tetraphosphate binding"/>
    <property type="evidence" value="ECO:0007669"/>
    <property type="project" value="UniProtKB-ARBA"/>
</dbReference>
<dbReference type="GO" id="GO:0043022">
    <property type="term" value="F:ribosome binding"/>
    <property type="evidence" value="ECO:0007669"/>
    <property type="project" value="UniProtKB-UniRule"/>
</dbReference>
<dbReference type="GO" id="GO:0003746">
    <property type="term" value="F:translation elongation factor activity"/>
    <property type="evidence" value="ECO:0007669"/>
    <property type="project" value="UniProtKB-UniRule"/>
</dbReference>
<dbReference type="GO" id="GO:0045727">
    <property type="term" value="P:positive regulation of translation"/>
    <property type="evidence" value="ECO:0007669"/>
    <property type="project" value="UniProtKB-UniRule"/>
</dbReference>
<dbReference type="CDD" id="cd03699">
    <property type="entry name" value="EF4_II"/>
    <property type="match status" value="1"/>
</dbReference>
<dbReference type="CDD" id="cd16260">
    <property type="entry name" value="EF4_III"/>
    <property type="match status" value="1"/>
</dbReference>
<dbReference type="CDD" id="cd01890">
    <property type="entry name" value="LepA"/>
    <property type="match status" value="1"/>
</dbReference>
<dbReference type="CDD" id="cd03709">
    <property type="entry name" value="lepA_C"/>
    <property type="match status" value="1"/>
</dbReference>
<dbReference type="FunFam" id="3.30.70.240:FF:000005">
    <property type="entry name" value="Elongation factor 4"/>
    <property type="match status" value="1"/>
</dbReference>
<dbReference type="FunFam" id="3.40.50.300:FF:000078">
    <property type="entry name" value="Elongation factor 4"/>
    <property type="match status" value="1"/>
</dbReference>
<dbReference type="FunFam" id="2.40.30.10:FF:000015">
    <property type="entry name" value="Translation factor GUF1, mitochondrial"/>
    <property type="match status" value="1"/>
</dbReference>
<dbReference type="FunFam" id="3.30.70.2570:FF:000001">
    <property type="entry name" value="Translation factor GUF1, mitochondrial"/>
    <property type="match status" value="1"/>
</dbReference>
<dbReference type="FunFam" id="3.30.70.870:FF:000004">
    <property type="entry name" value="Translation factor GUF1, mitochondrial"/>
    <property type="match status" value="1"/>
</dbReference>
<dbReference type="Gene3D" id="3.30.70.240">
    <property type="match status" value="1"/>
</dbReference>
<dbReference type="Gene3D" id="3.30.70.2570">
    <property type="entry name" value="Elongation factor 4, C-terminal domain"/>
    <property type="match status" value="1"/>
</dbReference>
<dbReference type="Gene3D" id="3.30.70.870">
    <property type="entry name" value="Elongation Factor G (Translational Gtpase), domain 3"/>
    <property type="match status" value="1"/>
</dbReference>
<dbReference type="Gene3D" id="3.40.50.300">
    <property type="entry name" value="P-loop containing nucleotide triphosphate hydrolases"/>
    <property type="match status" value="1"/>
</dbReference>
<dbReference type="Gene3D" id="2.40.30.10">
    <property type="entry name" value="Translation factors"/>
    <property type="match status" value="1"/>
</dbReference>
<dbReference type="HAMAP" id="MF_00071">
    <property type="entry name" value="LepA"/>
    <property type="match status" value="1"/>
</dbReference>
<dbReference type="InterPro" id="IPR006297">
    <property type="entry name" value="EF-4"/>
</dbReference>
<dbReference type="InterPro" id="IPR035647">
    <property type="entry name" value="EFG_III/V"/>
</dbReference>
<dbReference type="InterPro" id="IPR000640">
    <property type="entry name" value="EFG_V-like"/>
</dbReference>
<dbReference type="InterPro" id="IPR004161">
    <property type="entry name" value="EFTu-like_2"/>
</dbReference>
<dbReference type="InterPro" id="IPR031157">
    <property type="entry name" value="G_TR_CS"/>
</dbReference>
<dbReference type="InterPro" id="IPR038363">
    <property type="entry name" value="LepA_C_sf"/>
</dbReference>
<dbReference type="InterPro" id="IPR013842">
    <property type="entry name" value="LepA_CTD"/>
</dbReference>
<dbReference type="InterPro" id="IPR035654">
    <property type="entry name" value="LepA_IV"/>
</dbReference>
<dbReference type="InterPro" id="IPR027417">
    <property type="entry name" value="P-loop_NTPase"/>
</dbReference>
<dbReference type="InterPro" id="IPR005225">
    <property type="entry name" value="Small_GTP-bd"/>
</dbReference>
<dbReference type="InterPro" id="IPR000795">
    <property type="entry name" value="T_Tr_GTP-bd_dom"/>
</dbReference>
<dbReference type="NCBIfam" id="TIGR01393">
    <property type="entry name" value="lepA"/>
    <property type="match status" value="1"/>
</dbReference>
<dbReference type="NCBIfam" id="TIGR00231">
    <property type="entry name" value="small_GTP"/>
    <property type="match status" value="1"/>
</dbReference>
<dbReference type="PANTHER" id="PTHR43512:SF4">
    <property type="entry name" value="TRANSLATION FACTOR GUF1 HOMOLOG, CHLOROPLASTIC"/>
    <property type="match status" value="1"/>
</dbReference>
<dbReference type="PANTHER" id="PTHR43512">
    <property type="entry name" value="TRANSLATION FACTOR GUF1-RELATED"/>
    <property type="match status" value="1"/>
</dbReference>
<dbReference type="Pfam" id="PF00679">
    <property type="entry name" value="EFG_C"/>
    <property type="match status" value="1"/>
</dbReference>
<dbReference type="Pfam" id="PF00009">
    <property type="entry name" value="GTP_EFTU"/>
    <property type="match status" value="1"/>
</dbReference>
<dbReference type="Pfam" id="PF03144">
    <property type="entry name" value="GTP_EFTU_D2"/>
    <property type="match status" value="1"/>
</dbReference>
<dbReference type="Pfam" id="PF06421">
    <property type="entry name" value="LepA_C"/>
    <property type="match status" value="1"/>
</dbReference>
<dbReference type="PRINTS" id="PR00315">
    <property type="entry name" value="ELONGATNFCT"/>
</dbReference>
<dbReference type="SUPFAM" id="SSF54980">
    <property type="entry name" value="EF-G C-terminal domain-like"/>
    <property type="match status" value="2"/>
</dbReference>
<dbReference type="SUPFAM" id="SSF52540">
    <property type="entry name" value="P-loop containing nucleoside triphosphate hydrolases"/>
    <property type="match status" value="1"/>
</dbReference>
<dbReference type="PROSITE" id="PS00301">
    <property type="entry name" value="G_TR_1"/>
    <property type="match status" value="1"/>
</dbReference>
<dbReference type="PROSITE" id="PS51722">
    <property type="entry name" value="G_TR_2"/>
    <property type="match status" value="1"/>
</dbReference>